<comment type="function">
    <text evidence="1">Binds to the 23S rRNA.</text>
</comment>
<comment type="cofactor">
    <cofactor evidence="1">
        <name>Zn(2+)</name>
        <dbReference type="ChEBI" id="CHEBI:29105"/>
    </cofactor>
    <text evidence="1">Binds 1 zinc ion per subunit.</text>
</comment>
<comment type="subunit">
    <text evidence="1">Part of the 50S ribosomal subunit. Forms a cluster with proteins L3 and L14.</text>
</comment>
<comment type="similarity">
    <text evidence="1">Belongs to the eukaryotic ribosomal protein eL24 family.</text>
</comment>
<reference key="1">
    <citation type="submission" date="2007-10" db="EMBL/GenBank/DDBJ databases">
        <title>Complete sequence of Methanococcus maripaludis C6.</title>
        <authorList>
            <consortium name="US DOE Joint Genome Institute"/>
            <person name="Copeland A."/>
            <person name="Lucas S."/>
            <person name="Lapidus A."/>
            <person name="Barry K."/>
            <person name="Glavina del Rio T."/>
            <person name="Dalin E."/>
            <person name="Tice H."/>
            <person name="Pitluck S."/>
            <person name="Clum A."/>
            <person name="Schmutz J."/>
            <person name="Larimer F."/>
            <person name="Land M."/>
            <person name="Hauser L."/>
            <person name="Kyrpides N."/>
            <person name="Mikhailova N."/>
            <person name="Sieprawska-Lupa M."/>
            <person name="Whitman W.B."/>
            <person name="Richardson P."/>
        </authorList>
    </citation>
    <scope>NUCLEOTIDE SEQUENCE [LARGE SCALE GENOMIC DNA]</scope>
    <source>
        <strain>C6 / ATCC BAA-1332</strain>
    </source>
</reference>
<keyword id="KW-0479">Metal-binding</keyword>
<keyword id="KW-0687">Ribonucleoprotein</keyword>
<keyword id="KW-0689">Ribosomal protein</keyword>
<keyword id="KW-0694">RNA-binding</keyword>
<keyword id="KW-0699">rRNA-binding</keyword>
<keyword id="KW-0862">Zinc</keyword>
<keyword id="KW-0863">Zinc-finger</keyword>
<accession>A9A7E7</accession>
<gene>
    <name evidence="1" type="primary">rpl24e</name>
    <name type="ordered locus">MmarC6_0250</name>
</gene>
<proteinExistence type="inferred from homology"/>
<name>RL24E_METM6</name>
<organism>
    <name type="scientific">Methanococcus maripaludis (strain C6 / ATCC BAA-1332)</name>
    <dbReference type="NCBI Taxonomy" id="444158"/>
    <lineage>
        <taxon>Archaea</taxon>
        <taxon>Methanobacteriati</taxon>
        <taxon>Methanobacteriota</taxon>
        <taxon>Methanomada group</taxon>
        <taxon>Methanococci</taxon>
        <taxon>Methanococcales</taxon>
        <taxon>Methanococcaceae</taxon>
        <taxon>Methanococcus</taxon>
    </lineage>
</organism>
<dbReference type="EMBL" id="CP000867">
    <property type="protein sequence ID" value="ABX01071.1"/>
    <property type="molecule type" value="Genomic_DNA"/>
</dbReference>
<dbReference type="SMR" id="A9A7E7"/>
<dbReference type="STRING" id="444158.MmarC6_0250"/>
<dbReference type="KEGG" id="mmx:MmarC6_0250"/>
<dbReference type="eggNOG" id="arCOG01950">
    <property type="taxonomic scope" value="Archaea"/>
</dbReference>
<dbReference type="HOGENOM" id="CLU_190191_0_0_2"/>
<dbReference type="OrthoDB" id="55506at2157"/>
<dbReference type="PhylomeDB" id="A9A7E7"/>
<dbReference type="GO" id="GO:1990904">
    <property type="term" value="C:ribonucleoprotein complex"/>
    <property type="evidence" value="ECO:0007669"/>
    <property type="project" value="UniProtKB-KW"/>
</dbReference>
<dbReference type="GO" id="GO:0005840">
    <property type="term" value="C:ribosome"/>
    <property type="evidence" value="ECO:0007669"/>
    <property type="project" value="UniProtKB-KW"/>
</dbReference>
<dbReference type="GO" id="GO:0019843">
    <property type="term" value="F:rRNA binding"/>
    <property type="evidence" value="ECO:0007669"/>
    <property type="project" value="UniProtKB-UniRule"/>
</dbReference>
<dbReference type="GO" id="GO:0003735">
    <property type="term" value="F:structural constituent of ribosome"/>
    <property type="evidence" value="ECO:0007669"/>
    <property type="project" value="InterPro"/>
</dbReference>
<dbReference type="GO" id="GO:0008270">
    <property type="term" value="F:zinc ion binding"/>
    <property type="evidence" value="ECO:0007669"/>
    <property type="project" value="UniProtKB-UniRule"/>
</dbReference>
<dbReference type="GO" id="GO:0006412">
    <property type="term" value="P:translation"/>
    <property type="evidence" value="ECO:0007669"/>
    <property type="project" value="UniProtKB-UniRule"/>
</dbReference>
<dbReference type="CDD" id="cd00472">
    <property type="entry name" value="Ribosomal_L24e_L24"/>
    <property type="match status" value="1"/>
</dbReference>
<dbReference type="Gene3D" id="2.30.170.20">
    <property type="entry name" value="Ribosomal protein L24e"/>
    <property type="match status" value="1"/>
</dbReference>
<dbReference type="HAMAP" id="MF_00773">
    <property type="entry name" value="Ribosomal_eL24"/>
    <property type="match status" value="1"/>
</dbReference>
<dbReference type="InterPro" id="IPR038630">
    <property type="entry name" value="L24e/L24_sf"/>
</dbReference>
<dbReference type="InterPro" id="IPR056366">
    <property type="entry name" value="Ribosomal_eL24"/>
</dbReference>
<dbReference type="InterPro" id="IPR055345">
    <property type="entry name" value="Ribosomal_eL24-rel_arc"/>
</dbReference>
<dbReference type="InterPro" id="IPR000988">
    <property type="entry name" value="Ribosomal_eL24-rel_N"/>
</dbReference>
<dbReference type="InterPro" id="IPR023442">
    <property type="entry name" value="Ribosomal_eL24_CS"/>
</dbReference>
<dbReference type="InterPro" id="IPR011017">
    <property type="entry name" value="TRASH_dom"/>
</dbReference>
<dbReference type="NCBIfam" id="NF034186">
    <property type="entry name" value="PRK14891.1-1"/>
    <property type="match status" value="1"/>
</dbReference>
<dbReference type="PANTHER" id="PTHR10792">
    <property type="entry name" value="60S RIBOSOMAL PROTEIN L24"/>
    <property type="match status" value="1"/>
</dbReference>
<dbReference type="PANTHER" id="PTHR10792:SF1">
    <property type="entry name" value="RIBOSOMAL PROTEIN L24"/>
    <property type="match status" value="1"/>
</dbReference>
<dbReference type="Pfam" id="PF01246">
    <property type="entry name" value="Ribosomal_L24e"/>
    <property type="match status" value="1"/>
</dbReference>
<dbReference type="SMART" id="SM00746">
    <property type="entry name" value="TRASH"/>
    <property type="match status" value="1"/>
</dbReference>
<dbReference type="SUPFAM" id="SSF57716">
    <property type="entry name" value="Glucocorticoid receptor-like (DNA-binding domain)"/>
    <property type="match status" value="1"/>
</dbReference>
<dbReference type="PROSITE" id="PS01073">
    <property type="entry name" value="RIBOSOMAL_L24E"/>
    <property type="match status" value="1"/>
</dbReference>
<protein>
    <recommendedName>
        <fullName evidence="1">Large ribosomal subunit protein eL24</fullName>
    </recommendedName>
    <alternativeName>
        <fullName evidence="2">50S ribosomal protein L24e</fullName>
    </alternativeName>
</protein>
<evidence type="ECO:0000255" key="1">
    <source>
        <dbReference type="HAMAP-Rule" id="MF_00773"/>
    </source>
</evidence>
<evidence type="ECO:0000305" key="2"/>
<feature type="chain" id="PRO_1000193987" description="Large ribosomal subunit protein eL24">
    <location>
        <begin position="1"/>
        <end position="62"/>
    </location>
</feature>
<feature type="zinc finger region" description="C4-type" evidence="1">
    <location>
        <begin position="6"/>
        <end position="36"/>
    </location>
</feature>
<feature type="binding site" evidence="1">
    <location>
        <position position="6"/>
    </location>
    <ligand>
        <name>Zn(2+)</name>
        <dbReference type="ChEBI" id="CHEBI:29105"/>
    </ligand>
</feature>
<feature type="binding site" evidence="1">
    <location>
        <position position="9"/>
    </location>
    <ligand>
        <name>Zn(2+)</name>
        <dbReference type="ChEBI" id="CHEBI:29105"/>
    </ligand>
</feature>
<feature type="binding site" evidence="1">
    <location>
        <position position="32"/>
    </location>
    <ligand>
        <name>Zn(2+)</name>
        <dbReference type="ChEBI" id="CHEBI:29105"/>
    </ligand>
</feature>
<feature type="binding site" evidence="1">
    <location>
        <position position="36"/>
    </location>
    <ligand>
        <name>Zn(2+)</name>
        <dbReference type="ChEBI" id="CHEBI:29105"/>
    </ligand>
</feature>
<sequence length="62" mass="7193">MEWKTCSFCEGTIEPGCGKKYVKKDGSVMHFCSSKCEKNFKLGRVGRKLKWTNTFKRINRGQ</sequence>